<name>COAD_CHESB</name>
<proteinExistence type="inferred from homology"/>
<gene>
    <name evidence="1" type="primary">coaD</name>
    <name type="ordered locus">Meso_1402</name>
</gene>
<evidence type="ECO:0000255" key="1">
    <source>
        <dbReference type="HAMAP-Rule" id="MF_00151"/>
    </source>
</evidence>
<sequence length="166" mass="17557">MTDRTAFYAGSFDPLTNGHLDVLKGALELADTVVIGIGIHPGKKPLFSYGERVALIERSAKDELGADGGRIKVVAFDNLVIDAARVHGASIMIRGLRDGTDLDYEMQMAGMNQTMAPELLTVFLPASPSVRTVTATLVRQIASMGGNVAPFVPAVVAAALKEKFSA</sequence>
<protein>
    <recommendedName>
        <fullName evidence="1">Phosphopantetheine adenylyltransferase</fullName>
        <ecNumber evidence="1">2.7.7.3</ecNumber>
    </recommendedName>
    <alternativeName>
        <fullName evidence="1">Dephospho-CoA pyrophosphorylase</fullName>
    </alternativeName>
    <alternativeName>
        <fullName evidence="1">Pantetheine-phosphate adenylyltransferase</fullName>
        <shortName evidence="1">PPAT</shortName>
    </alternativeName>
</protein>
<reference key="1">
    <citation type="submission" date="2006-06" db="EMBL/GenBank/DDBJ databases">
        <title>Complete sequence of chromosome of Mesorhizobium sp. BNC1.</title>
        <authorList>
            <consortium name="US DOE Joint Genome Institute"/>
            <person name="Copeland A."/>
            <person name="Lucas S."/>
            <person name="Lapidus A."/>
            <person name="Barry K."/>
            <person name="Detter J.C."/>
            <person name="Glavina del Rio T."/>
            <person name="Hammon N."/>
            <person name="Israni S."/>
            <person name="Dalin E."/>
            <person name="Tice H."/>
            <person name="Pitluck S."/>
            <person name="Chertkov O."/>
            <person name="Brettin T."/>
            <person name="Bruce D."/>
            <person name="Han C."/>
            <person name="Tapia R."/>
            <person name="Gilna P."/>
            <person name="Schmutz J."/>
            <person name="Larimer F."/>
            <person name="Land M."/>
            <person name="Hauser L."/>
            <person name="Kyrpides N."/>
            <person name="Mikhailova N."/>
            <person name="Richardson P."/>
        </authorList>
    </citation>
    <scope>NUCLEOTIDE SEQUENCE [LARGE SCALE GENOMIC DNA]</scope>
    <source>
        <strain>BNC1</strain>
    </source>
</reference>
<accession>Q11IH7</accession>
<organism>
    <name type="scientific">Chelativorans sp. (strain BNC1)</name>
    <dbReference type="NCBI Taxonomy" id="266779"/>
    <lineage>
        <taxon>Bacteria</taxon>
        <taxon>Pseudomonadati</taxon>
        <taxon>Pseudomonadota</taxon>
        <taxon>Alphaproteobacteria</taxon>
        <taxon>Hyphomicrobiales</taxon>
        <taxon>Phyllobacteriaceae</taxon>
        <taxon>Chelativorans</taxon>
    </lineage>
</organism>
<comment type="function">
    <text evidence="1">Reversibly transfers an adenylyl group from ATP to 4'-phosphopantetheine, yielding dephospho-CoA (dPCoA) and pyrophosphate.</text>
</comment>
<comment type="catalytic activity">
    <reaction evidence="1">
        <text>(R)-4'-phosphopantetheine + ATP + H(+) = 3'-dephospho-CoA + diphosphate</text>
        <dbReference type="Rhea" id="RHEA:19801"/>
        <dbReference type="ChEBI" id="CHEBI:15378"/>
        <dbReference type="ChEBI" id="CHEBI:30616"/>
        <dbReference type="ChEBI" id="CHEBI:33019"/>
        <dbReference type="ChEBI" id="CHEBI:57328"/>
        <dbReference type="ChEBI" id="CHEBI:61723"/>
        <dbReference type="EC" id="2.7.7.3"/>
    </reaction>
</comment>
<comment type="cofactor">
    <cofactor evidence="1">
        <name>Mg(2+)</name>
        <dbReference type="ChEBI" id="CHEBI:18420"/>
    </cofactor>
</comment>
<comment type="pathway">
    <text evidence="1">Cofactor biosynthesis; coenzyme A biosynthesis; CoA from (R)-pantothenate: step 4/5.</text>
</comment>
<comment type="subunit">
    <text evidence="1">Homohexamer.</text>
</comment>
<comment type="subcellular location">
    <subcellularLocation>
        <location evidence="1">Cytoplasm</location>
    </subcellularLocation>
</comment>
<comment type="similarity">
    <text evidence="1">Belongs to the bacterial CoaD family.</text>
</comment>
<keyword id="KW-0067">ATP-binding</keyword>
<keyword id="KW-0173">Coenzyme A biosynthesis</keyword>
<keyword id="KW-0963">Cytoplasm</keyword>
<keyword id="KW-0460">Magnesium</keyword>
<keyword id="KW-0547">Nucleotide-binding</keyword>
<keyword id="KW-0548">Nucleotidyltransferase</keyword>
<keyword id="KW-0808">Transferase</keyword>
<feature type="chain" id="PRO_1000011174" description="Phosphopantetheine adenylyltransferase">
    <location>
        <begin position="1"/>
        <end position="166"/>
    </location>
</feature>
<feature type="binding site" evidence="1">
    <location>
        <begin position="11"/>
        <end position="12"/>
    </location>
    <ligand>
        <name>ATP</name>
        <dbReference type="ChEBI" id="CHEBI:30616"/>
    </ligand>
</feature>
<feature type="binding site" evidence="1">
    <location>
        <position position="11"/>
    </location>
    <ligand>
        <name>substrate</name>
    </ligand>
</feature>
<feature type="binding site" evidence="1">
    <location>
        <position position="19"/>
    </location>
    <ligand>
        <name>ATP</name>
        <dbReference type="ChEBI" id="CHEBI:30616"/>
    </ligand>
</feature>
<feature type="binding site" evidence="1">
    <location>
        <position position="43"/>
    </location>
    <ligand>
        <name>substrate</name>
    </ligand>
</feature>
<feature type="binding site" evidence="1">
    <location>
        <position position="80"/>
    </location>
    <ligand>
        <name>substrate</name>
    </ligand>
</feature>
<feature type="binding site" evidence="1">
    <location>
        <position position="94"/>
    </location>
    <ligand>
        <name>substrate</name>
    </ligand>
</feature>
<feature type="binding site" evidence="1">
    <location>
        <begin position="95"/>
        <end position="97"/>
    </location>
    <ligand>
        <name>ATP</name>
        <dbReference type="ChEBI" id="CHEBI:30616"/>
    </ligand>
</feature>
<feature type="binding site" evidence="1">
    <location>
        <position position="105"/>
    </location>
    <ligand>
        <name>ATP</name>
        <dbReference type="ChEBI" id="CHEBI:30616"/>
    </ligand>
</feature>
<feature type="binding site" evidence="1">
    <location>
        <begin position="130"/>
        <end position="136"/>
    </location>
    <ligand>
        <name>ATP</name>
        <dbReference type="ChEBI" id="CHEBI:30616"/>
    </ligand>
</feature>
<feature type="site" description="Transition state stabilizer" evidence="1">
    <location>
        <position position="19"/>
    </location>
</feature>
<dbReference type="EC" id="2.7.7.3" evidence="1"/>
<dbReference type="EMBL" id="CP000390">
    <property type="protein sequence ID" value="ABG62798.1"/>
    <property type="molecule type" value="Genomic_DNA"/>
</dbReference>
<dbReference type="SMR" id="Q11IH7"/>
<dbReference type="STRING" id="266779.Meso_1402"/>
<dbReference type="KEGG" id="mes:Meso_1402"/>
<dbReference type="eggNOG" id="COG0669">
    <property type="taxonomic scope" value="Bacteria"/>
</dbReference>
<dbReference type="HOGENOM" id="CLU_100149_0_1_5"/>
<dbReference type="OrthoDB" id="9806661at2"/>
<dbReference type="UniPathway" id="UPA00241">
    <property type="reaction ID" value="UER00355"/>
</dbReference>
<dbReference type="GO" id="GO:0005737">
    <property type="term" value="C:cytoplasm"/>
    <property type="evidence" value="ECO:0007669"/>
    <property type="project" value="UniProtKB-SubCell"/>
</dbReference>
<dbReference type="GO" id="GO:0005524">
    <property type="term" value="F:ATP binding"/>
    <property type="evidence" value="ECO:0007669"/>
    <property type="project" value="UniProtKB-KW"/>
</dbReference>
<dbReference type="GO" id="GO:0004595">
    <property type="term" value="F:pantetheine-phosphate adenylyltransferase activity"/>
    <property type="evidence" value="ECO:0007669"/>
    <property type="project" value="UniProtKB-UniRule"/>
</dbReference>
<dbReference type="GO" id="GO:0015937">
    <property type="term" value="P:coenzyme A biosynthetic process"/>
    <property type="evidence" value="ECO:0007669"/>
    <property type="project" value="UniProtKB-UniRule"/>
</dbReference>
<dbReference type="CDD" id="cd02163">
    <property type="entry name" value="PPAT"/>
    <property type="match status" value="1"/>
</dbReference>
<dbReference type="Gene3D" id="3.40.50.620">
    <property type="entry name" value="HUPs"/>
    <property type="match status" value="1"/>
</dbReference>
<dbReference type="HAMAP" id="MF_00151">
    <property type="entry name" value="PPAT_bact"/>
    <property type="match status" value="1"/>
</dbReference>
<dbReference type="InterPro" id="IPR004821">
    <property type="entry name" value="Cyt_trans-like"/>
</dbReference>
<dbReference type="InterPro" id="IPR001980">
    <property type="entry name" value="PPAT"/>
</dbReference>
<dbReference type="InterPro" id="IPR014729">
    <property type="entry name" value="Rossmann-like_a/b/a_fold"/>
</dbReference>
<dbReference type="NCBIfam" id="TIGR01510">
    <property type="entry name" value="coaD_prev_kdtB"/>
    <property type="match status" value="1"/>
</dbReference>
<dbReference type="NCBIfam" id="TIGR00125">
    <property type="entry name" value="cyt_tran_rel"/>
    <property type="match status" value="1"/>
</dbReference>
<dbReference type="PANTHER" id="PTHR21342">
    <property type="entry name" value="PHOSPHOPANTETHEINE ADENYLYLTRANSFERASE"/>
    <property type="match status" value="1"/>
</dbReference>
<dbReference type="PANTHER" id="PTHR21342:SF1">
    <property type="entry name" value="PHOSPHOPANTETHEINE ADENYLYLTRANSFERASE"/>
    <property type="match status" value="1"/>
</dbReference>
<dbReference type="Pfam" id="PF01467">
    <property type="entry name" value="CTP_transf_like"/>
    <property type="match status" value="1"/>
</dbReference>
<dbReference type="PRINTS" id="PR01020">
    <property type="entry name" value="LPSBIOSNTHSS"/>
</dbReference>
<dbReference type="SUPFAM" id="SSF52374">
    <property type="entry name" value="Nucleotidylyl transferase"/>
    <property type="match status" value="1"/>
</dbReference>